<sequence>MIVIPAIDLKEGKCVRLEQGLMDKDTVFCDNPAEQAREWERQGGELLHIVDLDGAFAGKPANKSAIEAIVKAVRIPTQLGGGIRDIETIKAYLDLGLSRVILGTAAQRNPKLVEEACKLFPGRIVVGIDAKNGLVAVQGWAEVTDVYAVDLARLFEGYGVTAVIYTDISRDGMMQGPNIDATRALAEAISIPVIASGGVSSLKDIENLMAVESAGVTGVITGKAIYTGAIKLAEAVALTKKCRQG</sequence>
<organism>
    <name type="scientific">Geotalea uraniireducens (strain Rf4)</name>
    <name type="common">Geobacter uraniireducens</name>
    <dbReference type="NCBI Taxonomy" id="351605"/>
    <lineage>
        <taxon>Bacteria</taxon>
        <taxon>Pseudomonadati</taxon>
        <taxon>Thermodesulfobacteriota</taxon>
        <taxon>Desulfuromonadia</taxon>
        <taxon>Geobacterales</taxon>
        <taxon>Geobacteraceae</taxon>
        <taxon>Geotalea</taxon>
    </lineage>
</organism>
<reference key="1">
    <citation type="submission" date="2007-05" db="EMBL/GenBank/DDBJ databases">
        <title>Complete sequence of Geobacter uraniireducens Rf4.</title>
        <authorList>
            <consortium name="US DOE Joint Genome Institute"/>
            <person name="Copeland A."/>
            <person name="Lucas S."/>
            <person name="Lapidus A."/>
            <person name="Barry K."/>
            <person name="Detter J.C."/>
            <person name="Glavina del Rio T."/>
            <person name="Hammon N."/>
            <person name="Israni S."/>
            <person name="Dalin E."/>
            <person name="Tice H."/>
            <person name="Pitluck S."/>
            <person name="Chertkov O."/>
            <person name="Brettin T."/>
            <person name="Bruce D."/>
            <person name="Han C."/>
            <person name="Schmutz J."/>
            <person name="Larimer F."/>
            <person name="Land M."/>
            <person name="Hauser L."/>
            <person name="Kyrpides N."/>
            <person name="Mikhailova N."/>
            <person name="Shelobolina E."/>
            <person name="Aklujkar M."/>
            <person name="Lovley D."/>
            <person name="Richardson P."/>
        </authorList>
    </citation>
    <scope>NUCLEOTIDE SEQUENCE [LARGE SCALE GENOMIC DNA]</scope>
    <source>
        <strain>ATCC BAA-1134 / JCM 13001 / Rf4</strain>
    </source>
</reference>
<feature type="chain" id="PRO_1000084099" description="1-(5-phosphoribosyl)-5-[(5-phosphoribosylamino)methylideneamino] imidazole-4-carboxamide isomerase">
    <location>
        <begin position="1"/>
        <end position="245"/>
    </location>
</feature>
<feature type="active site" description="Proton acceptor" evidence="1">
    <location>
        <position position="8"/>
    </location>
</feature>
<feature type="active site" description="Proton donor" evidence="1">
    <location>
        <position position="129"/>
    </location>
</feature>
<keyword id="KW-0028">Amino-acid biosynthesis</keyword>
<keyword id="KW-0963">Cytoplasm</keyword>
<keyword id="KW-0368">Histidine biosynthesis</keyword>
<keyword id="KW-0413">Isomerase</keyword>
<keyword id="KW-1185">Reference proteome</keyword>
<dbReference type="EC" id="5.3.1.16" evidence="1"/>
<dbReference type="EMBL" id="CP000698">
    <property type="protein sequence ID" value="ABQ28198.1"/>
    <property type="molecule type" value="Genomic_DNA"/>
</dbReference>
<dbReference type="RefSeq" id="WP_011940835.1">
    <property type="nucleotide sequence ID" value="NC_009483.1"/>
</dbReference>
<dbReference type="SMR" id="A5G8T0"/>
<dbReference type="STRING" id="351605.Gura_4054"/>
<dbReference type="KEGG" id="gur:Gura_4054"/>
<dbReference type="HOGENOM" id="CLU_048577_1_1_7"/>
<dbReference type="OrthoDB" id="9807749at2"/>
<dbReference type="UniPathway" id="UPA00031">
    <property type="reaction ID" value="UER00009"/>
</dbReference>
<dbReference type="Proteomes" id="UP000006695">
    <property type="component" value="Chromosome"/>
</dbReference>
<dbReference type="GO" id="GO:0005737">
    <property type="term" value="C:cytoplasm"/>
    <property type="evidence" value="ECO:0007669"/>
    <property type="project" value="UniProtKB-SubCell"/>
</dbReference>
<dbReference type="GO" id="GO:0003949">
    <property type="term" value="F:1-(5-phosphoribosyl)-5-[(5-phosphoribosylamino)methylideneamino]imidazole-4-carboxamide isomerase activity"/>
    <property type="evidence" value="ECO:0007669"/>
    <property type="project" value="UniProtKB-UniRule"/>
</dbReference>
<dbReference type="GO" id="GO:0000105">
    <property type="term" value="P:L-histidine biosynthetic process"/>
    <property type="evidence" value="ECO:0007669"/>
    <property type="project" value="UniProtKB-UniRule"/>
</dbReference>
<dbReference type="GO" id="GO:0000162">
    <property type="term" value="P:L-tryptophan biosynthetic process"/>
    <property type="evidence" value="ECO:0007669"/>
    <property type="project" value="TreeGrafter"/>
</dbReference>
<dbReference type="CDD" id="cd04732">
    <property type="entry name" value="HisA"/>
    <property type="match status" value="1"/>
</dbReference>
<dbReference type="FunFam" id="3.20.20.70:FF:000009">
    <property type="entry name" value="1-(5-phosphoribosyl)-5-[(5-phosphoribosylamino)methylideneamino] imidazole-4-carboxamide isomerase"/>
    <property type="match status" value="1"/>
</dbReference>
<dbReference type="Gene3D" id="3.20.20.70">
    <property type="entry name" value="Aldolase class I"/>
    <property type="match status" value="1"/>
</dbReference>
<dbReference type="HAMAP" id="MF_01014">
    <property type="entry name" value="HisA"/>
    <property type="match status" value="1"/>
</dbReference>
<dbReference type="InterPro" id="IPR013785">
    <property type="entry name" value="Aldolase_TIM"/>
</dbReference>
<dbReference type="InterPro" id="IPR006062">
    <property type="entry name" value="His_biosynth"/>
</dbReference>
<dbReference type="InterPro" id="IPR006063">
    <property type="entry name" value="HisA_bact_arch"/>
</dbReference>
<dbReference type="InterPro" id="IPR044524">
    <property type="entry name" value="Isoase_HisA-like"/>
</dbReference>
<dbReference type="InterPro" id="IPR023016">
    <property type="entry name" value="Isoase_HisA-like_bact"/>
</dbReference>
<dbReference type="InterPro" id="IPR011060">
    <property type="entry name" value="RibuloseP-bd_barrel"/>
</dbReference>
<dbReference type="NCBIfam" id="TIGR00007">
    <property type="entry name" value="1-(5-phosphoribosyl)-5-[(5-phosphoribosylamino)methylideneamino]imidazole-4-carboxamide isomerase"/>
    <property type="match status" value="1"/>
</dbReference>
<dbReference type="NCBIfam" id="NF010112">
    <property type="entry name" value="PRK13585.1"/>
    <property type="match status" value="1"/>
</dbReference>
<dbReference type="PANTHER" id="PTHR43090">
    <property type="entry name" value="1-(5-PHOSPHORIBOSYL)-5-[(5-PHOSPHORIBOSYLAMINO)METHYLIDENEAMINO] IMIDAZOLE-4-CARBOXAMIDE ISOMERASE"/>
    <property type="match status" value="1"/>
</dbReference>
<dbReference type="PANTHER" id="PTHR43090:SF2">
    <property type="entry name" value="1-(5-PHOSPHORIBOSYL)-5-[(5-PHOSPHORIBOSYLAMINO)METHYLIDENEAMINO] IMIDAZOLE-4-CARBOXAMIDE ISOMERASE"/>
    <property type="match status" value="1"/>
</dbReference>
<dbReference type="Pfam" id="PF00977">
    <property type="entry name" value="His_biosynth"/>
    <property type="match status" value="1"/>
</dbReference>
<dbReference type="SUPFAM" id="SSF51366">
    <property type="entry name" value="Ribulose-phoshate binding barrel"/>
    <property type="match status" value="1"/>
</dbReference>
<evidence type="ECO:0000255" key="1">
    <source>
        <dbReference type="HAMAP-Rule" id="MF_01014"/>
    </source>
</evidence>
<proteinExistence type="inferred from homology"/>
<accession>A5G8T0</accession>
<gene>
    <name evidence="1" type="primary">hisA</name>
    <name type="ordered locus">Gura_4054</name>
</gene>
<protein>
    <recommendedName>
        <fullName evidence="1">1-(5-phosphoribosyl)-5-[(5-phosphoribosylamino)methylideneamino] imidazole-4-carboxamide isomerase</fullName>
        <ecNumber evidence="1">5.3.1.16</ecNumber>
    </recommendedName>
    <alternativeName>
        <fullName evidence="1">Phosphoribosylformimino-5-aminoimidazole carboxamide ribotide isomerase</fullName>
    </alternativeName>
</protein>
<name>HIS4_GEOUR</name>
<comment type="catalytic activity">
    <reaction evidence="1">
        <text>1-(5-phospho-beta-D-ribosyl)-5-[(5-phospho-beta-D-ribosylamino)methylideneamino]imidazole-4-carboxamide = 5-[(5-phospho-1-deoxy-D-ribulos-1-ylimino)methylamino]-1-(5-phospho-beta-D-ribosyl)imidazole-4-carboxamide</text>
        <dbReference type="Rhea" id="RHEA:15469"/>
        <dbReference type="ChEBI" id="CHEBI:58435"/>
        <dbReference type="ChEBI" id="CHEBI:58525"/>
        <dbReference type="EC" id="5.3.1.16"/>
    </reaction>
</comment>
<comment type="pathway">
    <text evidence="1">Amino-acid biosynthesis; L-histidine biosynthesis; L-histidine from 5-phospho-alpha-D-ribose 1-diphosphate: step 4/9.</text>
</comment>
<comment type="subcellular location">
    <subcellularLocation>
        <location evidence="1">Cytoplasm</location>
    </subcellularLocation>
</comment>
<comment type="similarity">
    <text evidence="1">Belongs to the HisA/HisF family.</text>
</comment>